<comment type="function">
    <text evidence="2 5">Aromatic prenyl transferase; part of the gene cluster that mediates the biosynthesis of the indole diterpenes penitrems (PubMed:26213965). The geranylgeranyl diphosphate (GGPP) synthase penG catalyzes the first step in penitrem biosynthesis via conversion of farnesyl pyrophosphate and isopentyl pyrophosphate into geranylgeranyl pyrophosphate (GGPP) (Probable). Condensation of indole-3-glycerol phosphate with GGPP by the prenyl transferase penC then forms 3-geranylgeranylindole (3-GGI) (Probable). Epoxidation by the FAD-dependent monooxygenase penM leads to a epoxidized-GGI that is substrate of the terpene cyclase penB for cyclization to yield paspaline (Probable). Paspaline is subsequently converted to 13-desoxypaxilline by the cytochrome P450 monooxygenase penP, the latter being then converted to paxilline by the cytochrome P450 monooxygenase penQ (PubMed:26213965). Paxilline is converted to beta-paxitriol via C-10 ketoreduction by the short-chain dehydrogenase PC-15 which can be monoprenylated at the C-20 by the indole diterpene prenyltransferase penD (Probable). A two-step elimination (acetylation and elimination) process performed by the O-acetyltransferase PC-16 and the P.simplicissimum ptmI-ortholog not yet identified in P.crustosum, leads to the production of the prenylated form of penijanthine (Probable). The FAD-linked oxidoreductase ptmO then converts the prenylated form of penijanthine into PC-M5 which is in turn transformed into PC-M4 by the aromatic dimethylallyltransferase PC-22 (Probable). A series of oxidation steps involving 4 cytochrome P450 monooxygenases (PC-21, PC-05, PC-23, PC-20) and a FAD-dependent monooxygenase (PC-14) are required for the transformation of PC-M4 to penitrems A and E. Synthesis of these final products is proposed to proceed via penitrems D and C (PC-21, PC-05, PC-14) and penitrems B and F (PC-21, PC-05, PC-14, PC-23) (Probable).</text>
</comment>
<comment type="pathway">
    <text evidence="5">Secondary metabolite biosynthesis.</text>
</comment>
<comment type="subunit">
    <text evidence="1">Homodimer.</text>
</comment>
<comment type="similarity">
    <text evidence="4">Belongs to the tryptophan dimethylallyltransferase family.</text>
</comment>
<gene>
    <name evidence="3" type="primary">PC-22</name>
</gene>
<dbReference type="EC" id="2.5.1.-" evidence="5"/>
<dbReference type="EMBL" id="KC963408">
    <property type="protein sequence ID" value="AGZ20202.1"/>
    <property type="molecule type" value="Genomic_DNA"/>
</dbReference>
<dbReference type="SMR" id="A0A0E3D8Q1"/>
<dbReference type="GO" id="GO:0016765">
    <property type="term" value="F:transferase activity, transferring alkyl or aryl (other than methyl) groups"/>
    <property type="evidence" value="ECO:0007669"/>
    <property type="project" value="InterPro"/>
</dbReference>
<dbReference type="GO" id="GO:0009820">
    <property type="term" value="P:alkaloid metabolic process"/>
    <property type="evidence" value="ECO:0007669"/>
    <property type="project" value="InterPro"/>
</dbReference>
<dbReference type="CDD" id="cd13929">
    <property type="entry name" value="PT-DMATS_CymD"/>
    <property type="match status" value="1"/>
</dbReference>
<dbReference type="InterPro" id="IPR033964">
    <property type="entry name" value="Aro_prenylTrfase"/>
</dbReference>
<dbReference type="InterPro" id="IPR017795">
    <property type="entry name" value="Aro_prenylTrfase_DMATS"/>
</dbReference>
<dbReference type="InterPro" id="IPR012148">
    <property type="entry name" value="DMATS-type_fun"/>
</dbReference>
<dbReference type="NCBIfam" id="TIGR03429">
    <property type="entry name" value="arom_pren_DMATS"/>
    <property type="match status" value="1"/>
</dbReference>
<dbReference type="PANTHER" id="PTHR40627">
    <property type="entry name" value="INDOLE PRENYLTRANSFERASE TDIB-RELATED"/>
    <property type="match status" value="1"/>
</dbReference>
<dbReference type="PANTHER" id="PTHR40627:SF3">
    <property type="entry name" value="PRENYLTRANSFERASE ASQH2-RELATED"/>
    <property type="match status" value="1"/>
</dbReference>
<dbReference type="Pfam" id="PF11991">
    <property type="entry name" value="Trp_DMAT"/>
    <property type="match status" value="1"/>
</dbReference>
<dbReference type="PIRSF" id="PIRSF000509">
    <property type="entry name" value="Trp_DMAT"/>
    <property type="match status" value="1"/>
</dbReference>
<dbReference type="SFLD" id="SFLDS00036">
    <property type="entry name" value="Aromatic_Prenyltransferase"/>
    <property type="match status" value="1"/>
</dbReference>
<dbReference type="SFLD" id="SFLDG01162">
    <property type="entry name" value="I"/>
    <property type="match status" value="1"/>
</dbReference>
<reference key="1">
    <citation type="journal article" date="2015" name="Toxins">
        <title>Molecular cloning and functional analysis of gene clusters for the biosynthesis of indole-diterpenes in Penicillium crustosum and P. janthinellum.</title>
        <authorList>
            <person name="Nicholson M.J."/>
            <person name="Eaton C.J."/>
            <person name="Starkel C."/>
            <person name="Tapper B.A."/>
            <person name="Cox M.P."/>
            <person name="Scott B."/>
        </authorList>
    </citation>
    <scope>NUCLEOTIDE SEQUENCE [GENOMIC DNA]</scope>
    <scope>IDENTIFICATION</scope>
    <scope>FUNCTION</scope>
    <scope>PATHWAY</scope>
    <source>
        <strain>PN2402</strain>
    </source>
</reference>
<sequence length="425" mass="48870">MGSLSSPTSLTPYQVLSKYKKFPSPDEEFWWDHAASTLADLIKWTKATPAQEYEFLQFFYEHVIPNFSWYRPYDVPGRAWNTGITPSGLPLEYSVNWRNIDANAMVRVGVEPISQFAGTARDPYSHYKIWDTLNQLSQVKALKSFDLELWRHFSSALCTSREEEALLDQTRTLPESFSIAKMQHSMGFDFCDDEVIVKIYLIPNMKARASGTPLAELLTGSIHAIYRDTIDRETLATVINYLDSSSNFNDATWFSFDCIPRSQSRIKLYGSDFRTTWSRAEDLWTVGGRYTDAVTMKGLAYLKELWDLLPIQDFETLPEQAVQNPPMLWAYEIRPGDKTPSPRIYIPGHCLNDKKVADGLSTFFKRVGWSDLGDQYTDRLFSMFPKQDLKDSTALHTWIAFSYTEKSGVYMNCYYLASASFPFKL</sequence>
<organism>
    <name type="scientific">Penicillium crustosum</name>
    <name type="common">Blue mold fungus</name>
    <dbReference type="NCBI Taxonomy" id="36656"/>
    <lineage>
        <taxon>Eukaryota</taxon>
        <taxon>Fungi</taxon>
        <taxon>Dikarya</taxon>
        <taxon>Ascomycota</taxon>
        <taxon>Pezizomycotina</taxon>
        <taxon>Eurotiomycetes</taxon>
        <taxon>Eurotiomycetidae</taxon>
        <taxon>Eurotiales</taxon>
        <taxon>Aspergillaceae</taxon>
        <taxon>Penicillium</taxon>
    </lineage>
</organism>
<accession>A0A0E3D8Q1</accession>
<name>PC22_PENCR</name>
<feature type="chain" id="PRO_0000446561" description="Aromatic prenyl transferase PC-22">
    <location>
        <begin position="1"/>
        <end position="425"/>
    </location>
</feature>
<feature type="binding site" evidence="1">
    <location>
        <begin position="83"/>
        <end position="84"/>
    </location>
    <ligand>
        <name>L-tryptophan</name>
        <dbReference type="ChEBI" id="CHEBI:57912"/>
    </ligand>
</feature>
<feature type="binding site" evidence="1">
    <location>
        <position position="92"/>
    </location>
    <ligand>
        <name>L-tryptophan</name>
        <dbReference type="ChEBI" id="CHEBI:57912"/>
    </ligand>
</feature>
<feature type="binding site" evidence="1">
    <location>
        <position position="107"/>
    </location>
    <ligand>
        <name>substrate</name>
    </ligand>
</feature>
<feature type="binding site" evidence="1">
    <location>
        <position position="198"/>
    </location>
    <ligand>
        <name>substrate</name>
    </ligand>
</feature>
<feature type="binding site" evidence="1">
    <location>
        <position position="200"/>
    </location>
    <ligand>
        <name>substrate</name>
    </ligand>
</feature>
<feature type="binding site" evidence="1">
    <location>
        <position position="265"/>
    </location>
    <ligand>
        <name>substrate</name>
    </ligand>
</feature>
<feature type="binding site" evidence="1">
    <location>
        <position position="267"/>
    </location>
    <ligand>
        <name>substrate</name>
    </ligand>
</feature>
<feature type="binding site" evidence="1">
    <location>
        <position position="269"/>
    </location>
    <ligand>
        <name>substrate</name>
    </ligand>
</feature>
<feature type="binding site" evidence="1">
    <location>
        <position position="345"/>
    </location>
    <ligand>
        <name>substrate</name>
    </ligand>
</feature>
<feature type="binding site" evidence="1">
    <location>
        <position position="410"/>
    </location>
    <ligand>
        <name>substrate</name>
    </ligand>
</feature>
<feature type="binding site" evidence="1">
    <location>
        <position position="414"/>
    </location>
    <ligand>
        <name>substrate</name>
    </ligand>
</feature>
<proteinExistence type="inferred from homology"/>
<evidence type="ECO:0000250" key="1">
    <source>
        <dbReference type="UniProtKB" id="Q50EL0"/>
    </source>
</evidence>
<evidence type="ECO:0000269" key="2">
    <source>
    </source>
</evidence>
<evidence type="ECO:0000303" key="3">
    <source>
    </source>
</evidence>
<evidence type="ECO:0000305" key="4"/>
<evidence type="ECO:0000305" key="5">
    <source>
    </source>
</evidence>
<protein>
    <recommendedName>
        <fullName evidence="3">Aromatic prenyl transferase PC-22</fullName>
        <ecNumber evidence="5">2.5.1.-</ecNumber>
    </recommendedName>
    <alternativeName>
        <fullName evidence="3">Penitrem biosynthesis cluster protein PC-22</fullName>
    </alternativeName>
</protein>
<keyword id="KW-0808">Transferase</keyword>